<dbReference type="EC" id="2.1.1.191" evidence="1"/>
<dbReference type="EMBL" id="FM200053">
    <property type="protein sequence ID" value="CAR59835.1"/>
    <property type="molecule type" value="Genomic_DNA"/>
</dbReference>
<dbReference type="RefSeq" id="WP_000140483.1">
    <property type="nucleotide sequence ID" value="NC_011147.1"/>
</dbReference>
<dbReference type="SMR" id="B5BBK0"/>
<dbReference type="KEGG" id="sek:SSPA1643"/>
<dbReference type="HOGENOM" id="CLU_014042_0_0_6"/>
<dbReference type="Proteomes" id="UP000001869">
    <property type="component" value="Chromosome"/>
</dbReference>
<dbReference type="GO" id="GO:0005737">
    <property type="term" value="C:cytoplasm"/>
    <property type="evidence" value="ECO:0007669"/>
    <property type="project" value="UniProtKB-SubCell"/>
</dbReference>
<dbReference type="GO" id="GO:0003723">
    <property type="term" value="F:RNA binding"/>
    <property type="evidence" value="ECO:0007669"/>
    <property type="project" value="UniProtKB-KW"/>
</dbReference>
<dbReference type="GO" id="GO:0016434">
    <property type="term" value="F:rRNA (cytosine) methyltransferase activity"/>
    <property type="evidence" value="ECO:0007669"/>
    <property type="project" value="UniProtKB-UniRule"/>
</dbReference>
<dbReference type="CDD" id="cd02440">
    <property type="entry name" value="AdoMet_MTases"/>
    <property type="match status" value="1"/>
</dbReference>
<dbReference type="CDD" id="cd21153">
    <property type="entry name" value="PUA_RlmI"/>
    <property type="match status" value="1"/>
</dbReference>
<dbReference type="CDD" id="cd11572">
    <property type="entry name" value="RlmI_M_like"/>
    <property type="match status" value="1"/>
</dbReference>
<dbReference type="FunFam" id="3.40.50.150:FF:000044">
    <property type="entry name" value="Ribosomal RNA large subunit methyltransferase I"/>
    <property type="match status" value="1"/>
</dbReference>
<dbReference type="Gene3D" id="2.30.130.10">
    <property type="entry name" value="PUA domain"/>
    <property type="match status" value="1"/>
</dbReference>
<dbReference type="Gene3D" id="3.30.750.80">
    <property type="entry name" value="RNA methyltransferase domain (HRMD) like"/>
    <property type="match status" value="1"/>
</dbReference>
<dbReference type="Gene3D" id="3.40.50.150">
    <property type="entry name" value="Vaccinia Virus protein VP39"/>
    <property type="match status" value="1"/>
</dbReference>
<dbReference type="HAMAP" id="MF_01857">
    <property type="entry name" value="23SrRNA_methyltr_I"/>
    <property type="match status" value="1"/>
</dbReference>
<dbReference type="InterPro" id="IPR002478">
    <property type="entry name" value="PUA"/>
</dbReference>
<dbReference type="InterPro" id="IPR015947">
    <property type="entry name" value="PUA-like_sf"/>
</dbReference>
<dbReference type="InterPro" id="IPR036974">
    <property type="entry name" value="PUA_sf"/>
</dbReference>
<dbReference type="InterPro" id="IPR023542">
    <property type="entry name" value="RLMI"/>
</dbReference>
<dbReference type="InterPro" id="IPR041532">
    <property type="entry name" value="RlmI-like_PUA"/>
</dbReference>
<dbReference type="InterPro" id="IPR019614">
    <property type="entry name" value="SAM-dep_methyl-trfase"/>
</dbReference>
<dbReference type="InterPro" id="IPR029063">
    <property type="entry name" value="SAM-dependent_MTases_sf"/>
</dbReference>
<dbReference type="NCBIfam" id="NF011707">
    <property type="entry name" value="PRK15128.1"/>
    <property type="match status" value="1"/>
</dbReference>
<dbReference type="PANTHER" id="PTHR42873">
    <property type="entry name" value="RIBOSOMAL RNA LARGE SUBUNIT METHYLTRANSFERASE"/>
    <property type="match status" value="1"/>
</dbReference>
<dbReference type="PANTHER" id="PTHR42873:SF1">
    <property type="entry name" value="S-ADENOSYLMETHIONINE-DEPENDENT METHYLTRANSFERASE DOMAIN-CONTAINING PROTEIN"/>
    <property type="match status" value="1"/>
</dbReference>
<dbReference type="Pfam" id="PF10672">
    <property type="entry name" value="Methyltrans_SAM"/>
    <property type="match status" value="1"/>
</dbReference>
<dbReference type="Pfam" id="PF17785">
    <property type="entry name" value="PUA_3"/>
    <property type="match status" value="1"/>
</dbReference>
<dbReference type="SMART" id="SM00359">
    <property type="entry name" value="PUA"/>
    <property type="match status" value="1"/>
</dbReference>
<dbReference type="SUPFAM" id="SSF88697">
    <property type="entry name" value="PUA domain-like"/>
    <property type="match status" value="1"/>
</dbReference>
<dbReference type="SUPFAM" id="SSF53335">
    <property type="entry name" value="S-adenosyl-L-methionine-dependent methyltransferases"/>
    <property type="match status" value="1"/>
</dbReference>
<dbReference type="PROSITE" id="PS50890">
    <property type="entry name" value="PUA"/>
    <property type="match status" value="1"/>
</dbReference>
<evidence type="ECO:0000255" key="1">
    <source>
        <dbReference type="HAMAP-Rule" id="MF_01857"/>
    </source>
</evidence>
<gene>
    <name evidence="1" type="primary">rlmI</name>
    <name type="ordered locus">SSPA1643</name>
</gene>
<sequence length="403" mass="45202">MTESTFPQYPRLVLSKGREKSLLRRHPWVFSGAVSRLEGKANLGETIDIVDHQGKWLARGAWSPASQIRARVWTFDKAESIDIAFFTRRLRQAQQWRDWLAKKDGLDSYRLIAGESDGLPGVTIDRFGYFLVLQLLSAGAEYQRAALISALQTCYPDCAIYDRSDVAVRKKEGMALTQGPVTGELPPALLPIEEHGMKLLVDIQGGHKTGYYLDQRDSRLATRRYVENQRVLNCFSYTGGFAVSALMGGCRQVVSVDTSQDALDIARQNVELNQLDLSKAEFVRDDVFKLLRAYREHGEKFDVIIMDPPKFVENKSQLMGACRGYKDINMLAIQLLNPGGILLTFSCSGLMTSDLFQKIIADAAIDAGRDVQFIEQFRQAADHPVIATYPEGLYLKGFACRVM</sequence>
<protein>
    <recommendedName>
        <fullName evidence="1">Ribosomal RNA large subunit methyltransferase I</fullName>
        <ecNumber evidence="1">2.1.1.191</ecNumber>
    </recommendedName>
    <alternativeName>
        <fullName evidence="1">23S rRNA m5C1962 methyltransferase</fullName>
    </alternativeName>
    <alternativeName>
        <fullName evidence="1">rRNA (cytosine-C(5)-)-methyltransferase RlmI</fullName>
    </alternativeName>
</protein>
<accession>B5BBK0</accession>
<proteinExistence type="inferred from homology"/>
<feature type="chain" id="PRO_0000366248" description="Ribosomal RNA large subunit methyltransferase I">
    <location>
        <begin position="1"/>
        <end position="403"/>
    </location>
</feature>
<feature type="domain" description="PUA" evidence="1">
    <location>
        <begin position="9"/>
        <end position="88"/>
    </location>
</feature>
<keyword id="KW-0963">Cytoplasm</keyword>
<keyword id="KW-0489">Methyltransferase</keyword>
<keyword id="KW-0694">RNA-binding</keyword>
<keyword id="KW-0698">rRNA processing</keyword>
<keyword id="KW-0949">S-adenosyl-L-methionine</keyword>
<keyword id="KW-0808">Transferase</keyword>
<reference key="1">
    <citation type="journal article" date="2009" name="BMC Genomics">
        <title>Pseudogene accumulation in the evolutionary histories of Salmonella enterica serovars Paratyphi A and Typhi.</title>
        <authorList>
            <person name="Holt K.E."/>
            <person name="Thomson N.R."/>
            <person name="Wain J."/>
            <person name="Langridge G.C."/>
            <person name="Hasan R."/>
            <person name="Bhutta Z.A."/>
            <person name="Quail M.A."/>
            <person name="Norbertczak H."/>
            <person name="Walker D."/>
            <person name="Simmonds M."/>
            <person name="White B."/>
            <person name="Bason N."/>
            <person name="Mungall K."/>
            <person name="Dougan G."/>
            <person name="Parkhill J."/>
        </authorList>
    </citation>
    <scope>NUCLEOTIDE SEQUENCE [LARGE SCALE GENOMIC DNA]</scope>
    <source>
        <strain>AKU_12601</strain>
    </source>
</reference>
<organism>
    <name type="scientific">Salmonella paratyphi A (strain AKU_12601)</name>
    <dbReference type="NCBI Taxonomy" id="554290"/>
    <lineage>
        <taxon>Bacteria</taxon>
        <taxon>Pseudomonadati</taxon>
        <taxon>Pseudomonadota</taxon>
        <taxon>Gammaproteobacteria</taxon>
        <taxon>Enterobacterales</taxon>
        <taxon>Enterobacteriaceae</taxon>
        <taxon>Salmonella</taxon>
    </lineage>
</organism>
<name>RLMI_SALPK</name>
<comment type="function">
    <text evidence="1">Specifically methylates the cytosine at position 1962 (m5C1962) of 23S rRNA.</text>
</comment>
<comment type="catalytic activity">
    <reaction evidence="1">
        <text>cytidine(1962) in 23S rRNA + S-adenosyl-L-methionine = 5-methylcytidine(1962) in 23S rRNA + S-adenosyl-L-homocysteine + H(+)</text>
        <dbReference type="Rhea" id="RHEA:42912"/>
        <dbReference type="Rhea" id="RHEA-COMP:10382"/>
        <dbReference type="Rhea" id="RHEA-COMP:10386"/>
        <dbReference type="ChEBI" id="CHEBI:15378"/>
        <dbReference type="ChEBI" id="CHEBI:57856"/>
        <dbReference type="ChEBI" id="CHEBI:59789"/>
        <dbReference type="ChEBI" id="CHEBI:74483"/>
        <dbReference type="ChEBI" id="CHEBI:82748"/>
        <dbReference type="EC" id="2.1.1.191"/>
    </reaction>
</comment>
<comment type="subcellular location">
    <subcellularLocation>
        <location evidence="1">Cytoplasm</location>
    </subcellularLocation>
</comment>
<comment type="similarity">
    <text evidence="1">Belongs to the methyltransferase superfamily. RlmI family.</text>
</comment>